<comment type="function">
    <text evidence="1">Necessary for efficient RNA polymerase transcription elongation past template-encoded arresting sites. The arresting sites in DNA have the property of trapping a certain fraction of elongating RNA polymerases that pass through, resulting in locked ternary complexes. Cleavage of the nascent transcript by cleavage factors such as GreA or GreB allows the resumption of elongation from the new 3'terminus. GreA releases sequences of 2 to 3 nucleotides (By similarity).</text>
</comment>
<comment type="similarity">
    <text evidence="2">Belongs to the GreA/GreB family.</text>
</comment>
<evidence type="ECO:0000250" key="1"/>
<evidence type="ECO:0000305" key="2"/>
<reference key="1">
    <citation type="journal article" date="2001" name="Proc. Natl. Acad. Sci. U.S.A.">
        <title>Complete genomic sequence of Pasteurella multocida Pm70.</title>
        <authorList>
            <person name="May B.J."/>
            <person name="Zhang Q."/>
            <person name="Li L.L."/>
            <person name="Paustian M.L."/>
            <person name="Whittam T.S."/>
            <person name="Kapur V."/>
        </authorList>
    </citation>
    <scope>NUCLEOTIDE SEQUENCE [LARGE SCALE GENOMIC DNA]</scope>
    <source>
        <strain>Pm70</strain>
    </source>
</reference>
<keyword id="KW-0238">DNA-binding</keyword>
<keyword id="KW-1185">Reference proteome</keyword>
<keyword id="KW-0804">Transcription</keyword>
<keyword id="KW-0805">Transcription regulation</keyword>
<sequence>MKQIPMTIRGAEQLKQELDFLKNTRRPEIINAIAEAREHGDLKENAEYHAAREQQGFCEGRIQEIEGKLANSQIIDVTKIPNNGKVIFGATILLLNIDTEEEVSYQIVGDDEANIKAGLISVNSPIARGLIGKEVDDVVVIQTPGGKVEFEILEVEYK</sequence>
<proteinExistence type="inferred from homology"/>
<dbReference type="EMBL" id="AE004439">
    <property type="protein sequence ID" value="AAK02799.1"/>
    <property type="molecule type" value="Genomic_DNA"/>
</dbReference>
<dbReference type="RefSeq" id="WP_010906811.1">
    <property type="nucleotide sequence ID" value="NC_002663.1"/>
</dbReference>
<dbReference type="SMR" id="P57801"/>
<dbReference type="STRING" id="272843.PM0715"/>
<dbReference type="EnsemblBacteria" id="AAK02799">
    <property type="protein sequence ID" value="AAK02799"/>
    <property type="gene ID" value="PM0715"/>
</dbReference>
<dbReference type="KEGG" id="pmu:PM0715"/>
<dbReference type="PATRIC" id="fig|272843.6.peg.723"/>
<dbReference type="HOGENOM" id="CLU_101379_2_0_6"/>
<dbReference type="OrthoDB" id="9808774at2"/>
<dbReference type="Proteomes" id="UP000000809">
    <property type="component" value="Chromosome"/>
</dbReference>
<dbReference type="GO" id="GO:0003677">
    <property type="term" value="F:DNA binding"/>
    <property type="evidence" value="ECO:0007669"/>
    <property type="project" value="UniProtKB-UniRule"/>
</dbReference>
<dbReference type="GO" id="GO:0070063">
    <property type="term" value="F:RNA polymerase binding"/>
    <property type="evidence" value="ECO:0007669"/>
    <property type="project" value="InterPro"/>
</dbReference>
<dbReference type="GO" id="GO:0006354">
    <property type="term" value="P:DNA-templated transcription elongation"/>
    <property type="evidence" value="ECO:0007669"/>
    <property type="project" value="TreeGrafter"/>
</dbReference>
<dbReference type="GO" id="GO:0032784">
    <property type="term" value="P:regulation of DNA-templated transcription elongation"/>
    <property type="evidence" value="ECO:0007669"/>
    <property type="project" value="UniProtKB-UniRule"/>
</dbReference>
<dbReference type="FunFam" id="1.10.287.180:FF:000001">
    <property type="entry name" value="Transcription elongation factor GreA"/>
    <property type="match status" value="1"/>
</dbReference>
<dbReference type="FunFam" id="3.10.50.30:FF:000001">
    <property type="entry name" value="Transcription elongation factor GreA"/>
    <property type="match status" value="1"/>
</dbReference>
<dbReference type="Gene3D" id="3.10.50.30">
    <property type="entry name" value="Transcription elongation factor, GreA/GreB, C-terminal domain"/>
    <property type="match status" value="1"/>
</dbReference>
<dbReference type="Gene3D" id="1.10.287.180">
    <property type="entry name" value="Transcription elongation factor, GreA/GreB, N-terminal domain"/>
    <property type="match status" value="1"/>
</dbReference>
<dbReference type="HAMAP" id="MF_00105">
    <property type="entry name" value="GreA_GreB"/>
    <property type="match status" value="1"/>
</dbReference>
<dbReference type="InterPro" id="IPR036953">
    <property type="entry name" value="GreA/GreB_C_sf"/>
</dbReference>
<dbReference type="InterPro" id="IPR018151">
    <property type="entry name" value="TF_GreA/GreB_CS"/>
</dbReference>
<dbReference type="InterPro" id="IPR006359">
    <property type="entry name" value="Tscrpt_elong_fac_GreA"/>
</dbReference>
<dbReference type="InterPro" id="IPR028624">
    <property type="entry name" value="Tscrpt_elong_fac_GreA/B"/>
</dbReference>
<dbReference type="InterPro" id="IPR001437">
    <property type="entry name" value="Tscrpt_elong_fac_GreA/B_C"/>
</dbReference>
<dbReference type="InterPro" id="IPR023459">
    <property type="entry name" value="Tscrpt_elong_fac_GreA/B_fam"/>
</dbReference>
<dbReference type="InterPro" id="IPR022691">
    <property type="entry name" value="Tscrpt_elong_fac_GreA/B_N"/>
</dbReference>
<dbReference type="InterPro" id="IPR036805">
    <property type="entry name" value="Tscrpt_elong_fac_GreA/B_N_sf"/>
</dbReference>
<dbReference type="NCBIfam" id="TIGR01462">
    <property type="entry name" value="greA"/>
    <property type="match status" value="1"/>
</dbReference>
<dbReference type="NCBIfam" id="NF001261">
    <property type="entry name" value="PRK00226.1-2"/>
    <property type="match status" value="1"/>
</dbReference>
<dbReference type="NCBIfam" id="NF001263">
    <property type="entry name" value="PRK00226.1-4"/>
    <property type="match status" value="1"/>
</dbReference>
<dbReference type="NCBIfam" id="NF001264">
    <property type="entry name" value="PRK00226.1-5"/>
    <property type="match status" value="1"/>
</dbReference>
<dbReference type="PANTHER" id="PTHR30437">
    <property type="entry name" value="TRANSCRIPTION ELONGATION FACTOR GREA"/>
    <property type="match status" value="1"/>
</dbReference>
<dbReference type="PANTHER" id="PTHR30437:SF4">
    <property type="entry name" value="TRANSCRIPTION ELONGATION FACTOR GREA"/>
    <property type="match status" value="1"/>
</dbReference>
<dbReference type="Pfam" id="PF01272">
    <property type="entry name" value="GreA_GreB"/>
    <property type="match status" value="1"/>
</dbReference>
<dbReference type="Pfam" id="PF03449">
    <property type="entry name" value="GreA_GreB_N"/>
    <property type="match status" value="1"/>
</dbReference>
<dbReference type="PIRSF" id="PIRSF006092">
    <property type="entry name" value="GreA_GreB"/>
    <property type="match status" value="1"/>
</dbReference>
<dbReference type="SUPFAM" id="SSF54534">
    <property type="entry name" value="FKBP-like"/>
    <property type="match status" value="1"/>
</dbReference>
<dbReference type="SUPFAM" id="SSF46557">
    <property type="entry name" value="GreA transcript cleavage protein, N-terminal domain"/>
    <property type="match status" value="1"/>
</dbReference>
<dbReference type="PROSITE" id="PS00829">
    <property type="entry name" value="GREAB_1"/>
    <property type="match status" value="1"/>
</dbReference>
<dbReference type="PROSITE" id="PS00830">
    <property type="entry name" value="GREAB_2"/>
    <property type="match status" value="1"/>
</dbReference>
<gene>
    <name type="primary">greA</name>
    <name type="ordered locus">PM0715</name>
</gene>
<accession>P57801</accession>
<protein>
    <recommendedName>
        <fullName>Transcription elongation factor GreA</fullName>
    </recommendedName>
    <alternativeName>
        <fullName>Transcript cleavage factor GreA</fullName>
    </alternativeName>
</protein>
<name>GREA_PASMU</name>
<feature type="chain" id="PRO_0000176950" description="Transcription elongation factor GreA">
    <location>
        <begin position="1"/>
        <end position="158"/>
    </location>
</feature>
<organism>
    <name type="scientific">Pasteurella multocida (strain Pm70)</name>
    <dbReference type="NCBI Taxonomy" id="272843"/>
    <lineage>
        <taxon>Bacteria</taxon>
        <taxon>Pseudomonadati</taxon>
        <taxon>Pseudomonadota</taxon>
        <taxon>Gammaproteobacteria</taxon>
        <taxon>Pasteurellales</taxon>
        <taxon>Pasteurellaceae</taxon>
        <taxon>Pasteurella</taxon>
    </lineage>
</organism>